<organism>
    <name type="scientific">Arabidopsis thaliana</name>
    <name type="common">Mouse-ear cress</name>
    <dbReference type="NCBI Taxonomy" id="3702"/>
    <lineage>
        <taxon>Eukaryota</taxon>
        <taxon>Viridiplantae</taxon>
        <taxon>Streptophyta</taxon>
        <taxon>Embryophyta</taxon>
        <taxon>Tracheophyta</taxon>
        <taxon>Spermatophyta</taxon>
        <taxon>Magnoliopsida</taxon>
        <taxon>eudicotyledons</taxon>
        <taxon>Gunneridae</taxon>
        <taxon>Pentapetalae</taxon>
        <taxon>rosids</taxon>
        <taxon>malvids</taxon>
        <taxon>Brassicales</taxon>
        <taxon>Brassicaceae</taxon>
        <taxon>Camelineae</taxon>
        <taxon>Arabidopsis</taxon>
    </lineage>
</organism>
<evidence type="ECO:0000250" key="1"/>
<evidence type="ECO:0000255" key="2"/>
<evidence type="ECO:0000256" key="3">
    <source>
        <dbReference type="SAM" id="MobiDB-lite"/>
    </source>
</evidence>
<evidence type="ECO:0000305" key="4"/>
<protein>
    <recommendedName>
        <fullName>Microtubule-associated protein 70-3</fullName>
        <shortName>AtMAP70-3</shortName>
    </recommendedName>
    <alternativeName>
        <fullName>70 kDa microtubule-associated protein 3</fullName>
    </alternativeName>
</protein>
<comment type="function">
    <text evidence="1">Plant-specific protein that interact with microtubules.</text>
</comment>
<comment type="subcellular location">
    <subcellularLocation>
        <location evidence="1">Cytoplasm</location>
        <location evidence="1">Cytoskeleton</location>
    </subcellularLocation>
    <text>Associated to microtubules.</text>
</comment>
<comment type="alternative products">
    <event type="alternative splicing"/>
    <isoform>
        <id>Q9ZUA3-1</id>
        <name>1</name>
        <sequence type="displayed"/>
    </isoform>
    <text>A number of isoforms are produced. According to EST sequences.</text>
</comment>
<comment type="similarity">
    <text evidence="4">Belongs to the MAP70 family.</text>
</comment>
<accession>Q9ZUA3</accession>
<name>MP703_ARATH</name>
<feature type="chain" id="PRO_0000409459" description="Microtubule-associated protein 70-3">
    <location>
        <begin position="1"/>
        <end position="629"/>
    </location>
</feature>
<feature type="region of interest" description="Disordered" evidence="3">
    <location>
        <begin position="1"/>
        <end position="54"/>
    </location>
</feature>
<feature type="region of interest" description="Required for targeting to microtubules" evidence="1">
    <location>
        <begin position="257"/>
        <end position="493"/>
    </location>
</feature>
<feature type="region of interest" description="Disordered" evidence="3">
    <location>
        <begin position="391"/>
        <end position="421"/>
    </location>
</feature>
<feature type="region of interest" description="Disordered" evidence="3">
    <location>
        <begin position="458"/>
        <end position="519"/>
    </location>
</feature>
<feature type="region of interest" description="Disordered" evidence="3">
    <location>
        <begin position="578"/>
        <end position="629"/>
    </location>
</feature>
<feature type="coiled-coil region" evidence="2">
    <location>
        <begin position="75"/>
        <end position="375"/>
    </location>
</feature>
<feature type="coiled-coil region" evidence="2">
    <location>
        <begin position="544"/>
        <end position="592"/>
    </location>
</feature>
<feature type="compositionally biased region" description="Polar residues" evidence="3">
    <location>
        <begin position="13"/>
        <end position="33"/>
    </location>
</feature>
<feature type="compositionally biased region" description="Polar residues" evidence="3">
    <location>
        <begin position="393"/>
        <end position="416"/>
    </location>
</feature>
<feature type="compositionally biased region" description="Basic and acidic residues" evidence="3">
    <location>
        <begin position="578"/>
        <end position="596"/>
    </location>
</feature>
<feature type="compositionally biased region" description="Polar residues" evidence="3">
    <location>
        <begin position="603"/>
        <end position="613"/>
    </location>
</feature>
<reference key="1">
    <citation type="journal article" date="2005" name="Plant J.">
        <title>Identification of a novel family of 70 kDa microtubule-associated proteins in Arabidopsis cells.</title>
        <authorList>
            <person name="Korolev A.V."/>
            <person name="Chan J."/>
            <person name="Naldrett M.J."/>
            <person name="Doonan J.H."/>
            <person name="Lloyd C.W."/>
        </authorList>
    </citation>
    <scope>NUCLEOTIDE SEQUENCE [MRNA]</scope>
</reference>
<reference key="2">
    <citation type="journal article" date="1999" name="Nature">
        <title>Sequence and analysis of chromosome 2 of the plant Arabidopsis thaliana.</title>
        <authorList>
            <person name="Lin X."/>
            <person name="Kaul S."/>
            <person name="Rounsley S.D."/>
            <person name="Shea T.P."/>
            <person name="Benito M.-I."/>
            <person name="Town C.D."/>
            <person name="Fujii C.Y."/>
            <person name="Mason T.M."/>
            <person name="Bowman C.L."/>
            <person name="Barnstead M.E."/>
            <person name="Feldblyum T.V."/>
            <person name="Buell C.R."/>
            <person name="Ketchum K.A."/>
            <person name="Lee J.J."/>
            <person name="Ronning C.M."/>
            <person name="Koo H.L."/>
            <person name="Moffat K.S."/>
            <person name="Cronin L.A."/>
            <person name="Shen M."/>
            <person name="Pai G."/>
            <person name="Van Aken S."/>
            <person name="Umayam L."/>
            <person name="Tallon L.J."/>
            <person name="Gill J.E."/>
            <person name="Adams M.D."/>
            <person name="Carrera A.J."/>
            <person name="Creasy T.H."/>
            <person name="Goodman H.M."/>
            <person name="Somerville C.R."/>
            <person name="Copenhaver G.P."/>
            <person name="Preuss D."/>
            <person name="Nierman W.C."/>
            <person name="White O."/>
            <person name="Eisen J.A."/>
            <person name="Salzberg S.L."/>
            <person name="Fraser C.M."/>
            <person name="Venter J.C."/>
        </authorList>
    </citation>
    <scope>NUCLEOTIDE SEQUENCE [LARGE SCALE GENOMIC DNA]</scope>
    <source>
        <strain>cv. Columbia</strain>
    </source>
</reference>
<reference key="3">
    <citation type="journal article" date="2017" name="Plant J.">
        <title>Araport11: a complete reannotation of the Arabidopsis thaliana reference genome.</title>
        <authorList>
            <person name="Cheng C.Y."/>
            <person name="Krishnakumar V."/>
            <person name="Chan A.P."/>
            <person name="Thibaud-Nissen F."/>
            <person name="Schobel S."/>
            <person name="Town C.D."/>
        </authorList>
    </citation>
    <scope>GENOME REANNOTATION</scope>
    <source>
        <strain>cv. Columbia</strain>
    </source>
</reference>
<gene>
    <name type="primary">MAP70.3</name>
    <name type="ordered locus">At2g01750</name>
    <name type="ORF">T8O11.8</name>
</gene>
<dbReference type="EMBL" id="AM086440">
    <property type="protein sequence ID" value="CAJ31080.1"/>
    <property type="molecule type" value="mRNA"/>
</dbReference>
<dbReference type="EMBL" id="AC006069">
    <property type="protein sequence ID" value="AAD12697.1"/>
    <property type="molecule type" value="Genomic_DNA"/>
</dbReference>
<dbReference type="EMBL" id="CP002685">
    <property type="protein sequence ID" value="AEC05492.1"/>
    <property type="molecule type" value="Genomic_DNA"/>
</dbReference>
<dbReference type="PIR" id="F84428">
    <property type="entry name" value="F84428"/>
</dbReference>
<dbReference type="RefSeq" id="NP_178284.1">
    <molecule id="Q9ZUA3-1"/>
    <property type="nucleotide sequence ID" value="NM_126236.4"/>
</dbReference>
<dbReference type="SMR" id="Q9ZUA3"/>
<dbReference type="FunCoup" id="Q9ZUA3">
    <property type="interactions" value="1181"/>
</dbReference>
<dbReference type="STRING" id="3702.Q9ZUA3"/>
<dbReference type="iPTMnet" id="Q9ZUA3"/>
<dbReference type="PaxDb" id="3702-AT2G01750.2"/>
<dbReference type="ProteomicsDB" id="238266">
    <molecule id="Q9ZUA3-1"/>
</dbReference>
<dbReference type="EnsemblPlants" id="AT2G01750.1">
    <molecule id="Q9ZUA3-1"/>
    <property type="protein sequence ID" value="AT2G01750.1"/>
    <property type="gene ID" value="AT2G01750"/>
</dbReference>
<dbReference type="GeneID" id="814705"/>
<dbReference type="Gramene" id="AT2G01750.1">
    <molecule id="Q9ZUA3-1"/>
    <property type="protein sequence ID" value="AT2G01750.1"/>
    <property type="gene ID" value="AT2G01750"/>
</dbReference>
<dbReference type="KEGG" id="ath:AT2G01750"/>
<dbReference type="Araport" id="AT2G01750"/>
<dbReference type="TAIR" id="AT2G01750">
    <property type="gene designation" value="MAP70-3"/>
</dbReference>
<dbReference type="eggNOG" id="ENOG502QTPA">
    <property type="taxonomic scope" value="Eukaryota"/>
</dbReference>
<dbReference type="InParanoid" id="Q9ZUA3"/>
<dbReference type="OMA" id="YIPWSID"/>
<dbReference type="PhylomeDB" id="Q9ZUA3"/>
<dbReference type="CD-CODE" id="4299E36E">
    <property type="entry name" value="Nucleolus"/>
</dbReference>
<dbReference type="PRO" id="PR:Q9ZUA3"/>
<dbReference type="Proteomes" id="UP000006548">
    <property type="component" value="Chromosome 2"/>
</dbReference>
<dbReference type="ExpressionAtlas" id="Q9ZUA3">
    <property type="expression patterns" value="baseline and differential"/>
</dbReference>
<dbReference type="GO" id="GO:0005737">
    <property type="term" value="C:cytoplasm"/>
    <property type="evidence" value="ECO:0007669"/>
    <property type="project" value="UniProtKB-KW"/>
</dbReference>
<dbReference type="GO" id="GO:0005874">
    <property type="term" value="C:microtubule"/>
    <property type="evidence" value="ECO:0007669"/>
    <property type="project" value="UniProtKB-KW"/>
</dbReference>
<dbReference type="GO" id="GO:0008017">
    <property type="term" value="F:microtubule binding"/>
    <property type="evidence" value="ECO:0007669"/>
    <property type="project" value="InterPro"/>
</dbReference>
<dbReference type="GO" id="GO:0007010">
    <property type="term" value="P:cytoskeleton organization"/>
    <property type="evidence" value="ECO:0007669"/>
    <property type="project" value="InterPro"/>
</dbReference>
<dbReference type="InterPro" id="IPR009768">
    <property type="entry name" value="MAP70"/>
</dbReference>
<dbReference type="PANTHER" id="PTHR31246">
    <property type="entry name" value="MICROTUBULE-ASSOCIATED PROTEIN 70-2"/>
    <property type="match status" value="1"/>
</dbReference>
<dbReference type="PANTHER" id="PTHR31246:SF16">
    <property type="entry name" value="MICROTUBULE-ASSOCIATED PROTEIN 70-3"/>
    <property type="match status" value="1"/>
</dbReference>
<dbReference type="Pfam" id="PF07058">
    <property type="entry name" value="MAP70"/>
    <property type="match status" value="1"/>
</dbReference>
<keyword id="KW-0025">Alternative splicing</keyword>
<keyword id="KW-0175">Coiled coil</keyword>
<keyword id="KW-0963">Cytoplasm</keyword>
<keyword id="KW-0206">Cytoskeleton</keyword>
<keyword id="KW-0493">Microtubule</keyword>
<keyword id="KW-1185">Reference proteome</keyword>
<sequence>MEEGGYAFEVNNGRPTASEFGTTARISSPSLTMSSSFREGGGGGGSKGLTRRRSMKPSFDADNEFITLLHGSDPVKVELNRLENDVRDKDRELSESQAEIKALRLSERQREKAVEELTEELGKMSEKLKLTENLLDSKNLEIKKINEEKRASMAAQFAAEATLRRVHAAQKDDDMPPIEAILAPLEAELKLARHEIVKLQDDNRALDRLTKSKEAALLDAERTVQSALAKASMVDDLQNKNQELMKQIEICQEENRILDKLHRQKVAEVEKFTQTVRELEEAVLAGGTAANAVRDYQRKFQEMNEERRILDRELARAKVSASRVATVVANEWKDGSDKVMPVKQWLEERRFLQGEMQQLRDKLAIADRAAKSEAQLKEKFQLRLRVLEESLRGPSSSGNRSTPEGRSMSNGPSRRQSLGGADIIPKLTSNGFFSKRSPSSQFRSLNASTSTILKHAKGTSRSFDGGSRSLDRSKVLTNEPRSKFPLNQSSEGTSGGGSPNSTKQGDSEKAAGTNNDSVPGVLHDLLQKEVITLRKAANDKDQSLRDKDEAIEMLAKKVETLTKAMEVEAKKMRREVAAMEKEVSAMRVDNKGSDSRTRRHSTNSKGASTTAQLLSGRGSGRMGMTRSTQ</sequence>
<proteinExistence type="evidence at transcript level"/>